<feature type="chain" id="PRO_0000229492" description="GMP synthase [glutamine-hydrolyzing]">
    <location>
        <begin position="1"/>
        <end position="526"/>
    </location>
</feature>
<feature type="domain" description="Glutamine amidotransferase type-1" evidence="1">
    <location>
        <begin position="14"/>
        <end position="208"/>
    </location>
</feature>
<feature type="domain" description="GMPS ATP-PPase" evidence="1">
    <location>
        <begin position="209"/>
        <end position="401"/>
    </location>
</feature>
<feature type="active site" description="Nucleophile" evidence="1">
    <location>
        <position position="91"/>
    </location>
</feature>
<feature type="active site" evidence="1">
    <location>
        <position position="182"/>
    </location>
</feature>
<feature type="active site" evidence="1">
    <location>
        <position position="184"/>
    </location>
</feature>
<feature type="binding site" evidence="1">
    <location>
        <begin position="236"/>
        <end position="242"/>
    </location>
    <ligand>
        <name>ATP</name>
        <dbReference type="ChEBI" id="CHEBI:30616"/>
    </ligand>
</feature>
<comment type="function">
    <text evidence="1">Catalyzes the synthesis of GMP from XMP.</text>
</comment>
<comment type="catalytic activity">
    <reaction evidence="1">
        <text>XMP + L-glutamine + ATP + H2O = GMP + L-glutamate + AMP + diphosphate + 2 H(+)</text>
        <dbReference type="Rhea" id="RHEA:11680"/>
        <dbReference type="ChEBI" id="CHEBI:15377"/>
        <dbReference type="ChEBI" id="CHEBI:15378"/>
        <dbReference type="ChEBI" id="CHEBI:29985"/>
        <dbReference type="ChEBI" id="CHEBI:30616"/>
        <dbReference type="ChEBI" id="CHEBI:33019"/>
        <dbReference type="ChEBI" id="CHEBI:57464"/>
        <dbReference type="ChEBI" id="CHEBI:58115"/>
        <dbReference type="ChEBI" id="CHEBI:58359"/>
        <dbReference type="ChEBI" id="CHEBI:456215"/>
        <dbReference type="EC" id="6.3.5.2"/>
    </reaction>
</comment>
<comment type="pathway">
    <text evidence="1">Purine metabolism; GMP biosynthesis; GMP from XMP (L-Gln route): step 1/1.</text>
</comment>
<comment type="subunit">
    <text evidence="1">Homodimer.</text>
</comment>
<keyword id="KW-0067">ATP-binding</keyword>
<keyword id="KW-0315">Glutamine amidotransferase</keyword>
<keyword id="KW-0332">GMP biosynthesis</keyword>
<keyword id="KW-0436">Ligase</keyword>
<keyword id="KW-0547">Nucleotide-binding</keyword>
<keyword id="KW-0658">Purine biosynthesis</keyword>
<keyword id="KW-1185">Reference proteome</keyword>
<sequence>MSVSSIADKIVSESILIVDFGSQVTQLIARRVREAGVYSEIVPFNRAEEAFQRLQPKGIILSGSPASVVAEGSPRAPESFFQAGIPIFGICYGQQVMCHQLGGKVTANDVDGEFGRAFIDVIAPSPLFENLWKVGEKHQVWMSHADRVEALPEGFKPIAVSDGAPFALIADEKRRFYGMQFHPEVVHTPDGGKLIAHFVHDICGLAGDWTMAEFRQTKIAEIRKQVGDGRVICGLSGGVDSSVTAVLVHEAIGDQLTCVFVDHGLMRQGEAEQVVSLFREHYGIKLVHVNAEDRFLAGLKGVTDPETKRKFIGKTFIEIFEEEAKKIGGADFLAQGTLYPDVIESVSFLGGPSVTIKSHHNVGGLPERMNMKLVEPLRELFKDEVRDLGRELGMPDVFVDRHPFPGPGLAIRIPGEVTKERCDILRKADAVYLEEIRNAGLYNAIWQAFAVLLPVRTVGVMGDGRTYDSVCALRAVTSTDGMTAEIYPFQPEFLANVATRIVNEVRGINRVTYDFTSKPPGTIEWE</sequence>
<evidence type="ECO:0000255" key="1">
    <source>
        <dbReference type="HAMAP-Rule" id="MF_00344"/>
    </source>
</evidence>
<protein>
    <recommendedName>
        <fullName evidence="1">GMP synthase [glutamine-hydrolyzing]</fullName>
        <ecNumber evidence="1">6.3.5.2</ecNumber>
    </recommendedName>
    <alternativeName>
        <fullName evidence="1">GMP synthetase</fullName>
    </alternativeName>
    <alternativeName>
        <fullName evidence="1">Glutamine amidotransferase</fullName>
    </alternativeName>
</protein>
<reference key="1">
    <citation type="journal article" date="2005" name="Nat. Biotechnol.">
        <title>The genome sequence of the ethanologenic bacterium Zymomonas mobilis ZM4.</title>
        <authorList>
            <person name="Seo J.-S."/>
            <person name="Chong H."/>
            <person name="Park H.S."/>
            <person name="Yoon K.-O."/>
            <person name="Jung C."/>
            <person name="Kim J.J."/>
            <person name="Hong J.H."/>
            <person name="Kim H."/>
            <person name="Kim J.-H."/>
            <person name="Kil J.-I."/>
            <person name="Park C.J."/>
            <person name="Oh H.-M."/>
            <person name="Lee J.-S."/>
            <person name="Jin S.-J."/>
            <person name="Um H.-W."/>
            <person name="Lee H.-J."/>
            <person name="Oh S.-J."/>
            <person name="Kim J.Y."/>
            <person name="Kang H.L."/>
            <person name="Lee S.Y."/>
            <person name="Lee K.J."/>
            <person name="Kang H.S."/>
        </authorList>
    </citation>
    <scope>NUCLEOTIDE SEQUENCE [LARGE SCALE GENOMIC DNA]</scope>
    <source>
        <strain>ATCC 31821 / ZM4 / CP4</strain>
    </source>
</reference>
<gene>
    <name evidence="1" type="primary">guaA</name>
    <name type="ordered locus">ZMO1267</name>
</gene>
<dbReference type="EC" id="6.3.5.2" evidence="1"/>
<dbReference type="EMBL" id="AE008692">
    <property type="protein sequence ID" value="AAV89891.1"/>
    <property type="molecule type" value="Genomic_DNA"/>
</dbReference>
<dbReference type="RefSeq" id="WP_011241074.1">
    <property type="nucleotide sequence ID" value="NZ_CP035711.1"/>
</dbReference>
<dbReference type="SMR" id="Q5NN19"/>
<dbReference type="STRING" id="264203.ZMO1267"/>
<dbReference type="MEROPS" id="C26.A07"/>
<dbReference type="GeneID" id="79903618"/>
<dbReference type="KEGG" id="zmo:ZMO1267"/>
<dbReference type="eggNOG" id="COG0518">
    <property type="taxonomic scope" value="Bacteria"/>
</dbReference>
<dbReference type="eggNOG" id="COG0519">
    <property type="taxonomic scope" value="Bacteria"/>
</dbReference>
<dbReference type="HOGENOM" id="CLU_014340_0_5_5"/>
<dbReference type="UniPathway" id="UPA00189">
    <property type="reaction ID" value="UER00296"/>
</dbReference>
<dbReference type="Proteomes" id="UP000001173">
    <property type="component" value="Chromosome"/>
</dbReference>
<dbReference type="GO" id="GO:0005829">
    <property type="term" value="C:cytosol"/>
    <property type="evidence" value="ECO:0007669"/>
    <property type="project" value="TreeGrafter"/>
</dbReference>
<dbReference type="GO" id="GO:0005524">
    <property type="term" value="F:ATP binding"/>
    <property type="evidence" value="ECO:0007669"/>
    <property type="project" value="UniProtKB-UniRule"/>
</dbReference>
<dbReference type="GO" id="GO:0003921">
    <property type="term" value="F:GMP synthase activity"/>
    <property type="evidence" value="ECO:0007669"/>
    <property type="project" value="InterPro"/>
</dbReference>
<dbReference type="CDD" id="cd01742">
    <property type="entry name" value="GATase1_GMP_Synthase"/>
    <property type="match status" value="1"/>
</dbReference>
<dbReference type="CDD" id="cd01997">
    <property type="entry name" value="GMP_synthase_C"/>
    <property type="match status" value="1"/>
</dbReference>
<dbReference type="FunFam" id="3.30.300.10:FF:000002">
    <property type="entry name" value="GMP synthase [glutamine-hydrolyzing]"/>
    <property type="match status" value="1"/>
</dbReference>
<dbReference type="FunFam" id="3.40.50.620:FF:000001">
    <property type="entry name" value="GMP synthase [glutamine-hydrolyzing]"/>
    <property type="match status" value="1"/>
</dbReference>
<dbReference type="FunFam" id="3.40.50.880:FF:000001">
    <property type="entry name" value="GMP synthase [glutamine-hydrolyzing]"/>
    <property type="match status" value="1"/>
</dbReference>
<dbReference type="Gene3D" id="3.30.300.10">
    <property type="match status" value="1"/>
</dbReference>
<dbReference type="Gene3D" id="3.40.50.880">
    <property type="match status" value="1"/>
</dbReference>
<dbReference type="Gene3D" id="3.40.50.620">
    <property type="entry name" value="HUPs"/>
    <property type="match status" value="1"/>
</dbReference>
<dbReference type="HAMAP" id="MF_00344">
    <property type="entry name" value="GMP_synthase"/>
    <property type="match status" value="1"/>
</dbReference>
<dbReference type="InterPro" id="IPR029062">
    <property type="entry name" value="Class_I_gatase-like"/>
</dbReference>
<dbReference type="InterPro" id="IPR017926">
    <property type="entry name" value="GATASE"/>
</dbReference>
<dbReference type="InterPro" id="IPR001674">
    <property type="entry name" value="GMP_synth_C"/>
</dbReference>
<dbReference type="InterPro" id="IPR004739">
    <property type="entry name" value="GMP_synth_GATase"/>
</dbReference>
<dbReference type="InterPro" id="IPR022955">
    <property type="entry name" value="GMP_synthase"/>
</dbReference>
<dbReference type="InterPro" id="IPR025777">
    <property type="entry name" value="GMPS_ATP_PPase_dom"/>
</dbReference>
<dbReference type="InterPro" id="IPR022310">
    <property type="entry name" value="NAD/GMP_synthase"/>
</dbReference>
<dbReference type="InterPro" id="IPR014729">
    <property type="entry name" value="Rossmann-like_a/b/a_fold"/>
</dbReference>
<dbReference type="NCBIfam" id="TIGR00884">
    <property type="entry name" value="guaA_Cterm"/>
    <property type="match status" value="1"/>
</dbReference>
<dbReference type="NCBIfam" id="TIGR00888">
    <property type="entry name" value="guaA_Nterm"/>
    <property type="match status" value="1"/>
</dbReference>
<dbReference type="NCBIfam" id="NF000848">
    <property type="entry name" value="PRK00074.1"/>
    <property type="match status" value="1"/>
</dbReference>
<dbReference type="PANTHER" id="PTHR11922:SF2">
    <property type="entry name" value="GMP SYNTHASE [GLUTAMINE-HYDROLYZING]"/>
    <property type="match status" value="1"/>
</dbReference>
<dbReference type="PANTHER" id="PTHR11922">
    <property type="entry name" value="GMP SYNTHASE-RELATED"/>
    <property type="match status" value="1"/>
</dbReference>
<dbReference type="Pfam" id="PF00117">
    <property type="entry name" value="GATase"/>
    <property type="match status" value="1"/>
</dbReference>
<dbReference type="Pfam" id="PF00958">
    <property type="entry name" value="GMP_synt_C"/>
    <property type="match status" value="1"/>
</dbReference>
<dbReference type="Pfam" id="PF02540">
    <property type="entry name" value="NAD_synthase"/>
    <property type="match status" value="1"/>
</dbReference>
<dbReference type="PRINTS" id="PR00097">
    <property type="entry name" value="ANTSNTHASEII"/>
</dbReference>
<dbReference type="PRINTS" id="PR00099">
    <property type="entry name" value="CPSGATASE"/>
</dbReference>
<dbReference type="PRINTS" id="PR00096">
    <property type="entry name" value="GATASE"/>
</dbReference>
<dbReference type="SUPFAM" id="SSF52402">
    <property type="entry name" value="Adenine nucleotide alpha hydrolases-like"/>
    <property type="match status" value="1"/>
</dbReference>
<dbReference type="SUPFAM" id="SSF52317">
    <property type="entry name" value="Class I glutamine amidotransferase-like"/>
    <property type="match status" value="1"/>
</dbReference>
<dbReference type="SUPFAM" id="SSF54810">
    <property type="entry name" value="GMP synthetase C-terminal dimerisation domain"/>
    <property type="match status" value="1"/>
</dbReference>
<dbReference type="PROSITE" id="PS51273">
    <property type="entry name" value="GATASE_TYPE_1"/>
    <property type="match status" value="1"/>
</dbReference>
<dbReference type="PROSITE" id="PS51553">
    <property type="entry name" value="GMPS_ATP_PPASE"/>
    <property type="match status" value="1"/>
</dbReference>
<accession>Q5NN19</accession>
<proteinExistence type="inferred from homology"/>
<organism>
    <name type="scientific">Zymomonas mobilis subsp. mobilis (strain ATCC 31821 / ZM4 / CP4)</name>
    <dbReference type="NCBI Taxonomy" id="264203"/>
    <lineage>
        <taxon>Bacteria</taxon>
        <taxon>Pseudomonadati</taxon>
        <taxon>Pseudomonadota</taxon>
        <taxon>Alphaproteobacteria</taxon>
        <taxon>Sphingomonadales</taxon>
        <taxon>Zymomonadaceae</taxon>
        <taxon>Zymomonas</taxon>
    </lineage>
</organism>
<name>GUAA_ZYMMO</name>